<feature type="chain" id="PRO_0000369303" description="Cytoplasmic tRNA 2-thiolation protein 2">
    <location>
        <begin position="1"/>
        <end position="371"/>
    </location>
</feature>
<evidence type="ECO:0000255" key="1">
    <source>
        <dbReference type="HAMAP-Rule" id="MF_03054"/>
    </source>
</evidence>
<reference key="1">
    <citation type="journal article" date="2011" name="PLoS Genet.">
        <title>Genomic analysis of the necrotrophic fungal pathogens Sclerotinia sclerotiorum and Botrytis cinerea.</title>
        <authorList>
            <person name="Amselem J."/>
            <person name="Cuomo C.A."/>
            <person name="van Kan J.A.L."/>
            <person name="Viaud M."/>
            <person name="Benito E.P."/>
            <person name="Couloux A."/>
            <person name="Coutinho P.M."/>
            <person name="de Vries R.P."/>
            <person name="Dyer P.S."/>
            <person name="Fillinger S."/>
            <person name="Fournier E."/>
            <person name="Gout L."/>
            <person name="Hahn M."/>
            <person name="Kohn L."/>
            <person name="Lapalu N."/>
            <person name="Plummer K.M."/>
            <person name="Pradier J.-M."/>
            <person name="Quevillon E."/>
            <person name="Sharon A."/>
            <person name="Simon A."/>
            <person name="ten Have A."/>
            <person name="Tudzynski B."/>
            <person name="Tudzynski P."/>
            <person name="Wincker P."/>
            <person name="Andrew M."/>
            <person name="Anthouard V."/>
            <person name="Beever R.E."/>
            <person name="Beffa R."/>
            <person name="Benoit I."/>
            <person name="Bouzid O."/>
            <person name="Brault B."/>
            <person name="Chen Z."/>
            <person name="Choquer M."/>
            <person name="Collemare J."/>
            <person name="Cotton P."/>
            <person name="Danchin E.G."/>
            <person name="Da Silva C."/>
            <person name="Gautier A."/>
            <person name="Giraud C."/>
            <person name="Giraud T."/>
            <person name="Gonzalez C."/>
            <person name="Grossetete S."/>
            <person name="Gueldener U."/>
            <person name="Henrissat B."/>
            <person name="Howlett B.J."/>
            <person name="Kodira C."/>
            <person name="Kretschmer M."/>
            <person name="Lappartient A."/>
            <person name="Leroch M."/>
            <person name="Levis C."/>
            <person name="Mauceli E."/>
            <person name="Neuveglise C."/>
            <person name="Oeser B."/>
            <person name="Pearson M."/>
            <person name="Poulain J."/>
            <person name="Poussereau N."/>
            <person name="Quesneville H."/>
            <person name="Rascle C."/>
            <person name="Schumacher J."/>
            <person name="Segurens B."/>
            <person name="Sexton A."/>
            <person name="Silva E."/>
            <person name="Sirven C."/>
            <person name="Soanes D.M."/>
            <person name="Talbot N.J."/>
            <person name="Templeton M."/>
            <person name="Yandava C."/>
            <person name="Yarden O."/>
            <person name="Zeng Q."/>
            <person name="Rollins J.A."/>
            <person name="Lebrun M.-H."/>
            <person name="Dickman M."/>
        </authorList>
    </citation>
    <scope>NUCLEOTIDE SEQUENCE [LARGE SCALE GENOMIC DNA]</scope>
    <source>
        <strain>ATCC 18683 / 1980 / Ss-1</strain>
    </source>
</reference>
<protein>
    <recommendedName>
        <fullName evidence="1">Cytoplasmic tRNA 2-thiolation protein 2</fullName>
    </recommendedName>
</protein>
<dbReference type="EMBL" id="CH476638">
    <property type="protein sequence ID" value="EDN95482.1"/>
    <property type="molecule type" value="Genomic_DNA"/>
</dbReference>
<dbReference type="RefSeq" id="XP_001587368.1">
    <property type="nucleotide sequence ID" value="XM_001587318.1"/>
</dbReference>
<dbReference type="SMR" id="A7F190"/>
<dbReference type="FunCoup" id="A7F190">
    <property type="interactions" value="167"/>
</dbReference>
<dbReference type="STRING" id="665079.A7F190"/>
<dbReference type="GeneID" id="5483509"/>
<dbReference type="KEGG" id="ssl:SS1G_11360"/>
<dbReference type="InParanoid" id="A7F190"/>
<dbReference type="OMA" id="EGDSTWA"/>
<dbReference type="UniPathway" id="UPA00988"/>
<dbReference type="Proteomes" id="UP000001312">
    <property type="component" value="Unassembled WGS sequence"/>
</dbReference>
<dbReference type="GO" id="GO:0005829">
    <property type="term" value="C:cytosol"/>
    <property type="evidence" value="ECO:0000250"/>
    <property type="project" value="UniProtKB"/>
</dbReference>
<dbReference type="GO" id="GO:0016779">
    <property type="term" value="F:nucleotidyltransferase activity"/>
    <property type="evidence" value="ECO:0007669"/>
    <property type="project" value="UniProtKB-UniRule"/>
</dbReference>
<dbReference type="GO" id="GO:0016783">
    <property type="term" value="F:sulfurtransferase activity"/>
    <property type="evidence" value="ECO:0000318"/>
    <property type="project" value="GO_Central"/>
</dbReference>
<dbReference type="GO" id="GO:0000049">
    <property type="term" value="F:tRNA binding"/>
    <property type="evidence" value="ECO:0007669"/>
    <property type="project" value="InterPro"/>
</dbReference>
<dbReference type="GO" id="GO:0032447">
    <property type="term" value="P:protein urmylation"/>
    <property type="evidence" value="ECO:0007669"/>
    <property type="project" value="UniProtKB-UniRule"/>
</dbReference>
<dbReference type="GO" id="GO:0034227">
    <property type="term" value="P:tRNA thio-modification"/>
    <property type="evidence" value="ECO:0000250"/>
    <property type="project" value="UniProtKB"/>
</dbReference>
<dbReference type="GO" id="GO:0002143">
    <property type="term" value="P:tRNA wobble position uridine thiolation"/>
    <property type="evidence" value="ECO:0000318"/>
    <property type="project" value="GO_Central"/>
</dbReference>
<dbReference type="GO" id="GO:0002098">
    <property type="term" value="P:tRNA wobble uridine modification"/>
    <property type="evidence" value="ECO:0000250"/>
    <property type="project" value="UniProtKB"/>
</dbReference>
<dbReference type="Gene3D" id="3.40.50.620">
    <property type="entry name" value="HUPs"/>
    <property type="match status" value="1"/>
</dbReference>
<dbReference type="HAMAP" id="MF_03054">
    <property type="entry name" value="CTU2"/>
    <property type="match status" value="1"/>
</dbReference>
<dbReference type="InterPro" id="IPR019407">
    <property type="entry name" value="CTU2"/>
</dbReference>
<dbReference type="InterPro" id="IPR014729">
    <property type="entry name" value="Rossmann-like_a/b/a_fold"/>
</dbReference>
<dbReference type="PANTHER" id="PTHR20882">
    <property type="entry name" value="CYTOPLASMIC TRNA 2-THIOLATION PROTEIN 2"/>
    <property type="match status" value="1"/>
</dbReference>
<dbReference type="PANTHER" id="PTHR20882:SF14">
    <property type="entry name" value="CYTOPLASMIC TRNA 2-THIOLATION PROTEIN 2"/>
    <property type="match status" value="1"/>
</dbReference>
<dbReference type="SUPFAM" id="SSF52402">
    <property type="entry name" value="Adenine nucleotide alpha hydrolases-like"/>
    <property type="match status" value="1"/>
</dbReference>
<sequence>MAPPNTKESQLPGEQPTALCKRCNEVQATLQIRSESVCQKCFLQYIKTKAVKRMETYKGKRSTKVPQKLLLPLSFGPSSSCLLHMLDGYLGIQHERMNRVSYELFVVHIDLYLDDADREASAARLQKYKDQYPRHSYSSYGLHEALQLEGIDWQSLGISDLPTQDTKASSFDLQKIVSSLSSATSRADIVSTLLNRLLVDVAKRNDCESILFGDTTTRLAEKTLTETAKGRGFSLPWQVSDGPSPYGIGFLYPLRDILKKEIMTFSTSFSPLPELVVHQAPPSHISASSKSTTIDDLMAQYFESVEENFPSIVANVAVEFAGFLSQRALMASMVGVEIKIQIHGHQEKTLIQILFYAMDAQDLSTDESARP</sequence>
<name>CTU2_SCLS1</name>
<keyword id="KW-0963">Cytoplasm</keyword>
<keyword id="KW-1185">Reference proteome</keyword>
<keyword id="KW-0819">tRNA processing</keyword>
<gene>
    <name type="primary">ncs2</name>
    <name type="synonym">ctu2</name>
    <name type="ORF">SS1G_11360</name>
</gene>
<proteinExistence type="inferred from homology"/>
<organism>
    <name type="scientific">Sclerotinia sclerotiorum (strain ATCC 18683 / 1980 / Ss-1)</name>
    <name type="common">White mold</name>
    <name type="synonym">Whetzelinia sclerotiorum</name>
    <dbReference type="NCBI Taxonomy" id="665079"/>
    <lineage>
        <taxon>Eukaryota</taxon>
        <taxon>Fungi</taxon>
        <taxon>Dikarya</taxon>
        <taxon>Ascomycota</taxon>
        <taxon>Pezizomycotina</taxon>
        <taxon>Leotiomycetes</taxon>
        <taxon>Helotiales</taxon>
        <taxon>Sclerotiniaceae</taxon>
        <taxon>Sclerotinia</taxon>
    </lineage>
</organism>
<comment type="function">
    <text evidence="1">Plays a central role in 2-thiolation of mcm(5)S(2)U at tRNA wobble positions of tRNA(Lys), tRNA(Glu) and tRNA(Gln). May act by forming a heterodimer with ncs6 that ligates sulfur from thiocarboxylated urm1 onto the uridine of tRNAs at wobble position. Prior mcm(5) tRNA modification by the elongator complex is required for 2-thiolation. May also be involved in protein urmylation.</text>
</comment>
<comment type="pathway">
    <text evidence="1">tRNA modification; 5-methoxycarbonylmethyl-2-thiouridine-tRNA biosynthesis.</text>
</comment>
<comment type="subcellular location">
    <subcellularLocation>
        <location evidence="1">Cytoplasm</location>
    </subcellularLocation>
</comment>
<comment type="similarity">
    <text evidence="1">Belongs to the CTU2/NCS2 family.</text>
</comment>
<accession>A7F190</accession>